<reference key="1">
    <citation type="journal article" date="1998" name="Genetics">
        <title>Departure from neutrality at the mitochondrial NADH dehydrogenase subunit 2 gene in humans, but not in chimpanzees.</title>
        <authorList>
            <person name="Wise C.A."/>
            <person name="Sraml M."/>
            <person name="Easteal S."/>
        </authorList>
    </citation>
    <scope>NUCLEOTIDE SEQUENCE [GENOMIC DNA]</scope>
    <scope>VARIANT SER-94</scope>
</reference>
<reference key="2">
    <citation type="journal article" date="1995" name="Proc. Natl. Acad. Sci. U.S.A.">
        <title>Recent African origin of modern humans revealed by complete sequences of hominoid mitochondrial DNAs.</title>
        <authorList>
            <person name="Horai S."/>
            <person name="Hayasaka K."/>
            <person name="Kondo R."/>
            <person name="Tsugane K."/>
            <person name="Takahata N."/>
        </authorList>
    </citation>
    <scope>NUCLEOTIDE SEQUENCE [GENOMIC DNA]</scope>
    <scope>VARIANT SER-94</scope>
</reference>
<dbReference type="EC" id="7.1.1.2" evidence="1"/>
<dbReference type="EMBL" id="AF014908">
    <property type="protein sequence ID" value="AAC25467.1"/>
    <property type="molecule type" value="Genomic_DNA"/>
</dbReference>
<dbReference type="EMBL" id="AF014909">
    <property type="protein sequence ID" value="AAC25468.1"/>
    <property type="molecule type" value="Genomic_DNA"/>
</dbReference>
<dbReference type="EMBL" id="AF014910">
    <property type="protein sequence ID" value="AAC25469.1"/>
    <property type="molecule type" value="Genomic_DNA"/>
</dbReference>
<dbReference type="EMBL" id="AF014911">
    <property type="protein sequence ID" value="AAC25470.1"/>
    <property type="molecule type" value="Genomic_DNA"/>
</dbReference>
<dbReference type="EMBL" id="AF014912">
    <property type="protein sequence ID" value="AAC25471.1"/>
    <property type="molecule type" value="Genomic_DNA"/>
</dbReference>
<dbReference type="EMBL" id="AF014913">
    <property type="protein sequence ID" value="AAC25472.1"/>
    <property type="molecule type" value="Genomic_DNA"/>
</dbReference>
<dbReference type="EMBL" id="AF014914">
    <property type="protein sequence ID" value="AAC25473.1"/>
    <property type="molecule type" value="Genomic_DNA"/>
</dbReference>
<dbReference type="EMBL" id="AF014915">
    <property type="protein sequence ID" value="AAC25474.1"/>
    <property type="molecule type" value="Genomic_DNA"/>
</dbReference>
<dbReference type="EMBL" id="AF014916">
    <property type="protein sequence ID" value="AAC25475.1"/>
    <property type="molecule type" value="Genomic_DNA"/>
</dbReference>
<dbReference type="EMBL" id="AF014917">
    <property type="protein sequence ID" value="AAC25476.1"/>
    <property type="molecule type" value="Genomic_DNA"/>
</dbReference>
<dbReference type="EMBL" id="AF014918">
    <property type="protein sequence ID" value="AAC25477.1"/>
    <property type="molecule type" value="Genomic_DNA"/>
</dbReference>
<dbReference type="EMBL" id="AF014919">
    <property type="protein sequence ID" value="AAC25478.1"/>
    <property type="molecule type" value="Genomic_DNA"/>
</dbReference>
<dbReference type="EMBL" id="AF014920">
    <property type="protein sequence ID" value="AAC25479.1"/>
    <property type="molecule type" value="Genomic_DNA"/>
</dbReference>
<dbReference type="EMBL" id="AF014921">
    <property type="protein sequence ID" value="AAC25480.1"/>
    <property type="molecule type" value="Genomic_DNA"/>
</dbReference>
<dbReference type="EMBL" id="D38113">
    <property type="protein sequence ID" value="BAA85269.1"/>
    <property type="molecule type" value="Genomic_DNA"/>
</dbReference>
<dbReference type="RefSeq" id="NP_008187.1">
    <property type="nucleotide sequence ID" value="NC_001643.1"/>
</dbReference>
<dbReference type="SMR" id="O21798"/>
<dbReference type="FunCoup" id="O21798">
    <property type="interactions" value="261"/>
</dbReference>
<dbReference type="STRING" id="9598.ENSPTRP00000061406"/>
<dbReference type="PaxDb" id="9598-ENSPTRP00000061406"/>
<dbReference type="GeneID" id="807865"/>
<dbReference type="KEGG" id="ptr:807865"/>
<dbReference type="CTD" id="4536"/>
<dbReference type="eggNOG" id="KOG4668">
    <property type="taxonomic scope" value="Eukaryota"/>
</dbReference>
<dbReference type="InParanoid" id="O21798"/>
<dbReference type="Proteomes" id="UP000002277">
    <property type="component" value="Mitochondrion"/>
</dbReference>
<dbReference type="GO" id="GO:0005743">
    <property type="term" value="C:mitochondrial inner membrane"/>
    <property type="evidence" value="ECO:0000250"/>
    <property type="project" value="UniProtKB"/>
</dbReference>
<dbReference type="GO" id="GO:0045271">
    <property type="term" value="C:respiratory chain complex I"/>
    <property type="evidence" value="ECO:0000318"/>
    <property type="project" value="GO_Central"/>
</dbReference>
<dbReference type="GO" id="GO:0008137">
    <property type="term" value="F:NADH dehydrogenase (ubiquinone) activity"/>
    <property type="evidence" value="ECO:0000250"/>
    <property type="project" value="UniProtKB"/>
</dbReference>
<dbReference type="GO" id="GO:0006120">
    <property type="term" value="P:mitochondrial electron transport, NADH to ubiquinone"/>
    <property type="evidence" value="ECO:0000250"/>
    <property type="project" value="UniProtKB"/>
</dbReference>
<dbReference type="GO" id="GO:0032981">
    <property type="term" value="P:mitochondrial respiratory chain complex I assembly"/>
    <property type="evidence" value="ECO:0000250"/>
    <property type="project" value="UniProtKB"/>
</dbReference>
<dbReference type="InterPro" id="IPR050175">
    <property type="entry name" value="Complex_I_Subunit_2"/>
</dbReference>
<dbReference type="InterPro" id="IPR010933">
    <property type="entry name" value="NADH_DH_su2_C"/>
</dbReference>
<dbReference type="InterPro" id="IPR003917">
    <property type="entry name" value="NADH_UbQ_OxRdtase_chain2"/>
</dbReference>
<dbReference type="InterPro" id="IPR001750">
    <property type="entry name" value="ND/Mrp_TM"/>
</dbReference>
<dbReference type="PANTHER" id="PTHR46552">
    <property type="entry name" value="NADH-UBIQUINONE OXIDOREDUCTASE CHAIN 2"/>
    <property type="match status" value="1"/>
</dbReference>
<dbReference type="PANTHER" id="PTHR46552:SF1">
    <property type="entry name" value="NADH-UBIQUINONE OXIDOREDUCTASE CHAIN 2"/>
    <property type="match status" value="1"/>
</dbReference>
<dbReference type="Pfam" id="PF06444">
    <property type="entry name" value="NADH_dehy_S2_C"/>
    <property type="match status" value="1"/>
</dbReference>
<dbReference type="Pfam" id="PF00361">
    <property type="entry name" value="Proton_antipo_M"/>
    <property type="match status" value="1"/>
</dbReference>
<dbReference type="PRINTS" id="PR01436">
    <property type="entry name" value="NADHDHGNASE2"/>
</dbReference>
<keyword id="KW-0249">Electron transport</keyword>
<keyword id="KW-0472">Membrane</keyword>
<keyword id="KW-0496">Mitochondrion</keyword>
<keyword id="KW-0999">Mitochondrion inner membrane</keyword>
<keyword id="KW-0520">NAD</keyword>
<keyword id="KW-1185">Reference proteome</keyword>
<keyword id="KW-0679">Respiratory chain</keyword>
<keyword id="KW-1278">Translocase</keyword>
<keyword id="KW-0812">Transmembrane</keyword>
<keyword id="KW-1133">Transmembrane helix</keyword>
<keyword id="KW-0813">Transport</keyword>
<keyword id="KW-0830">Ubiquinone</keyword>
<comment type="function">
    <text evidence="1">Core subunit of the mitochondrial membrane respiratory chain NADH dehydrogenase (Complex I) which catalyzes electron transfer from NADH through the respiratory chain, using ubiquinone as an electron acceptor. Essential for the catalytic activity and assembly of complex I.</text>
</comment>
<comment type="catalytic activity">
    <reaction evidence="1">
        <text>a ubiquinone + NADH + 5 H(+)(in) = a ubiquinol + NAD(+) + 4 H(+)(out)</text>
        <dbReference type="Rhea" id="RHEA:29091"/>
        <dbReference type="Rhea" id="RHEA-COMP:9565"/>
        <dbReference type="Rhea" id="RHEA-COMP:9566"/>
        <dbReference type="ChEBI" id="CHEBI:15378"/>
        <dbReference type="ChEBI" id="CHEBI:16389"/>
        <dbReference type="ChEBI" id="CHEBI:17976"/>
        <dbReference type="ChEBI" id="CHEBI:57540"/>
        <dbReference type="ChEBI" id="CHEBI:57945"/>
        <dbReference type="EC" id="7.1.1.2"/>
    </reaction>
</comment>
<comment type="subunit">
    <text evidence="1 2">Core subunit of respiratory chain NADH dehydrogenase (Complex I) which is composed of 45 different subunits. Interacts with TMEM242 (By similarity).</text>
</comment>
<comment type="subcellular location">
    <subcellularLocation>
        <location evidence="2">Mitochondrion inner membrane</location>
        <topology evidence="3">Multi-pass membrane protein</topology>
    </subcellularLocation>
</comment>
<comment type="similarity">
    <text evidence="6">Belongs to the complex I subunit 2 family.</text>
</comment>
<gene>
    <name evidence="1" type="primary">MT-ND2</name>
    <name type="synonym">MTND2</name>
    <name type="synonym">NADH2</name>
    <name type="synonym">ND2</name>
</gene>
<name>NU2M_PANTR</name>
<evidence type="ECO:0000250" key="1">
    <source>
        <dbReference type="UniProtKB" id="P03891"/>
    </source>
</evidence>
<evidence type="ECO:0000250" key="2">
    <source>
        <dbReference type="UniProtKB" id="P03892"/>
    </source>
</evidence>
<evidence type="ECO:0000255" key="3"/>
<evidence type="ECO:0000269" key="4">
    <source>
    </source>
</evidence>
<evidence type="ECO:0000269" key="5">
    <source>
    </source>
</evidence>
<evidence type="ECO:0000305" key="6"/>
<sequence>MNPLAQPIIYSTIFTGTLITALSSHWFFTWVGLEMNMLAFIPILTKKMSPRSTEAATKYFLTQATASMILLMAILSNSMLSGQWTMTNTTNQYPSLMIMMAMAMKLGMAPFHFWVPEVTQGTPLMSGLLLLTWQKLAPISIMYQISSSLNVNLLLTLSILSIMAGSWGGLNQTQLRKILAYSSITHMGWMMAVLPYNPNMTILNLTIYIILTTTAFLLLNLNSSTTTLLLSRTWNKLTWLTPLIPSTLLSLGGLPPLTGFLPKWVIIEEFTKNNSLIIPTIMAIITLLNLYFYLRLIYSTSITLLPMSNNVKMKWQFEHTKPTPFLPTLITLTTLLLPISPFMLMIL</sequence>
<protein>
    <recommendedName>
        <fullName evidence="1">NADH-ubiquinone oxidoreductase chain 2</fullName>
        <ecNumber evidence="1">7.1.1.2</ecNumber>
    </recommendedName>
    <alternativeName>
        <fullName>NADH dehydrogenase subunit 2</fullName>
    </alternativeName>
</protein>
<organism>
    <name type="scientific">Pan troglodytes</name>
    <name type="common">Chimpanzee</name>
    <dbReference type="NCBI Taxonomy" id="9598"/>
    <lineage>
        <taxon>Eukaryota</taxon>
        <taxon>Metazoa</taxon>
        <taxon>Chordata</taxon>
        <taxon>Craniata</taxon>
        <taxon>Vertebrata</taxon>
        <taxon>Euteleostomi</taxon>
        <taxon>Mammalia</taxon>
        <taxon>Eutheria</taxon>
        <taxon>Euarchontoglires</taxon>
        <taxon>Primates</taxon>
        <taxon>Haplorrhini</taxon>
        <taxon>Catarrhini</taxon>
        <taxon>Hominidae</taxon>
        <taxon>Pan</taxon>
    </lineage>
</organism>
<feature type="chain" id="PRO_0000117617" description="NADH-ubiquinone oxidoreductase chain 2">
    <location>
        <begin position="1"/>
        <end position="347"/>
    </location>
</feature>
<feature type="transmembrane region" description="Helical" evidence="3">
    <location>
        <begin position="13"/>
        <end position="33"/>
    </location>
</feature>
<feature type="transmembrane region" description="Helical" evidence="3">
    <location>
        <begin position="60"/>
        <end position="80"/>
    </location>
</feature>
<feature type="transmembrane region" description="Helical" evidence="3">
    <location>
        <begin position="96"/>
        <end position="116"/>
    </location>
</feature>
<feature type="transmembrane region" description="Helical" evidence="3">
    <location>
        <begin position="123"/>
        <end position="143"/>
    </location>
</feature>
<feature type="transmembrane region" description="Helical" evidence="3">
    <location>
        <begin position="149"/>
        <end position="169"/>
    </location>
</feature>
<feature type="transmembrane region" description="Helical" evidence="3">
    <location>
        <begin position="178"/>
        <end position="198"/>
    </location>
</feature>
<feature type="transmembrane region" description="Helical" evidence="3">
    <location>
        <begin position="201"/>
        <end position="221"/>
    </location>
</feature>
<feature type="transmembrane region" description="Helical" evidence="3">
    <location>
        <begin position="247"/>
        <end position="267"/>
    </location>
</feature>
<feature type="transmembrane region" description="Helical" evidence="3">
    <location>
        <begin position="274"/>
        <end position="294"/>
    </location>
</feature>
<feature type="transmembrane region" description="Helical" evidence="3">
    <location>
        <begin position="326"/>
        <end position="346"/>
    </location>
</feature>
<feature type="sequence variant" id="VAR_018716" description="In strain: Isolate A-292." evidence="4 5">
    <original>P</original>
    <variation>S</variation>
    <location>
        <position position="94"/>
    </location>
</feature>
<feature type="sequence conflict" description="In Ref. 2; BAA85269." evidence="6" ref="2">
    <original>F</original>
    <variation>L</variation>
    <location>
        <position position="14"/>
    </location>
</feature>
<feature type="sequence conflict" description="In Ref. 2; AAC25469/AAC25472/AAC25476/AAC25479/BAA85269." evidence="6" ref="2">
    <original>T</original>
    <variation>I</variation>
    <location>
        <position position="57"/>
    </location>
</feature>
<accession>O21798</accession>
<accession>Q9T9W2</accession>
<proteinExistence type="inferred from homology"/>
<geneLocation type="mitochondrion"/>